<comment type="function">
    <text evidence="1">NDH-1 shuttles electrons from NADH, via FMN and iron-sulfur (Fe-S) centers, to quinones in the respiratory chain. Couples the redox reaction to proton translocation (for every two electrons transferred, four hydrogen ions are translocated across the cytoplasmic membrane), and thus conserves the redox energy in a proton gradient (By similarity).</text>
</comment>
<comment type="catalytic activity">
    <reaction evidence="2">
        <text>a quinone + NADH + 5 H(+)(in) = a quinol + NAD(+) + 4 H(+)(out)</text>
        <dbReference type="Rhea" id="RHEA:57888"/>
        <dbReference type="ChEBI" id="CHEBI:15378"/>
        <dbReference type="ChEBI" id="CHEBI:24646"/>
        <dbReference type="ChEBI" id="CHEBI:57540"/>
        <dbReference type="ChEBI" id="CHEBI:57945"/>
        <dbReference type="ChEBI" id="CHEBI:132124"/>
    </reaction>
</comment>
<comment type="cofactor">
    <cofactor evidence="2">
        <name>[4Fe-4S] cluster</name>
        <dbReference type="ChEBI" id="CHEBI:49883"/>
    </cofactor>
    <text evidence="2">Binds 1 [4Fe-4S] cluster.</text>
</comment>
<comment type="subunit">
    <text evidence="2">NDH-1 is composed of 14 different subunits. Subunits NuoB, C, D, E, F, and G constitute the peripheral sector of the complex.</text>
</comment>
<comment type="subcellular location">
    <subcellularLocation>
        <location evidence="2">Cell inner membrane</location>
        <topology evidence="2">Peripheral membrane protein</topology>
        <orientation evidence="2">Cytoplasmic side</orientation>
    </subcellularLocation>
</comment>
<comment type="similarity">
    <text evidence="2">Belongs to the complex I 20 kDa subunit family.</text>
</comment>
<keyword id="KW-0004">4Fe-4S</keyword>
<keyword id="KW-0997">Cell inner membrane</keyword>
<keyword id="KW-1003">Cell membrane</keyword>
<keyword id="KW-0408">Iron</keyword>
<keyword id="KW-0411">Iron-sulfur</keyword>
<keyword id="KW-0472">Membrane</keyword>
<keyword id="KW-0479">Metal-binding</keyword>
<keyword id="KW-0520">NAD</keyword>
<keyword id="KW-0874">Quinone</keyword>
<keyword id="KW-1185">Reference proteome</keyword>
<keyword id="KW-1278">Translocase</keyword>
<keyword id="KW-0813">Transport</keyword>
<keyword id="KW-0830">Ubiquinone</keyword>
<feature type="chain" id="PRO_0000358424" description="NADH-quinone oxidoreductase subunit B">
    <location>
        <begin position="1"/>
        <end position="158"/>
    </location>
</feature>
<feature type="binding site" evidence="2">
    <location>
        <position position="37"/>
    </location>
    <ligand>
        <name>[4Fe-4S] cluster</name>
        <dbReference type="ChEBI" id="CHEBI:49883"/>
    </ligand>
</feature>
<feature type="binding site" evidence="2">
    <location>
        <position position="38"/>
    </location>
    <ligand>
        <name>[4Fe-4S] cluster</name>
        <dbReference type="ChEBI" id="CHEBI:49883"/>
    </ligand>
</feature>
<feature type="binding site" evidence="2">
    <location>
        <position position="102"/>
    </location>
    <ligand>
        <name>[4Fe-4S] cluster</name>
        <dbReference type="ChEBI" id="CHEBI:49883"/>
    </ligand>
</feature>
<feature type="binding site" evidence="2">
    <location>
        <position position="132"/>
    </location>
    <ligand>
        <name>[4Fe-4S] cluster</name>
        <dbReference type="ChEBI" id="CHEBI:49883"/>
    </ligand>
</feature>
<organism>
    <name type="scientific">Methylibium petroleiphilum (strain ATCC BAA-1232 / LMG 22953 / PM1)</name>
    <dbReference type="NCBI Taxonomy" id="420662"/>
    <lineage>
        <taxon>Bacteria</taxon>
        <taxon>Pseudomonadati</taxon>
        <taxon>Pseudomonadota</taxon>
        <taxon>Betaproteobacteria</taxon>
        <taxon>Burkholderiales</taxon>
        <taxon>Sphaerotilaceae</taxon>
        <taxon>Methylibium</taxon>
    </lineage>
</organism>
<dbReference type="EC" id="7.1.1.-" evidence="2"/>
<dbReference type="EMBL" id="CP000555">
    <property type="protein sequence ID" value="ABM94366.1"/>
    <property type="molecule type" value="Genomic_DNA"/>
</dbReference>
<dbReference type="RefSeq" id="WP_011829003.1">
    <property type="nucleotide sequence ID" value="NC_008825.1"/>
</dbReference>
<dbReference type="SMR" id="A2SFM7"/>
<dbReference type="STRING" id="420662.Mpe_A1404"/>
<dbReference type="KEGG" id="mpt:Mpe_A1404"/>
<dbReference type="eggNOG" id="COG0377">
    <property type="taxonomic scope" value="Bacteria"/>
</dbReference>
<dbReference type="HOGENOM" id="CLU_055737_7_3_4"/>
<dbReference type="Proteomes" id="UP000000366">
    <property type="component" value="Chromosome"/>
</dbReference>
<dbReference type="GO" id="GO:0005886">
    <property type="term" value="C:plasma membrane"/>
    <property type="evidence" value="ECO:0007669"/>
    <property type="project" value="UniProtKB-SubCell"/>
</dbReference>
<dbReference type="GO" id="GO:0045271">
    <property type="term" value="C:respiratory chain complex I"/>
    <property type="evidence" value="ECO:0007669"/>
    <property type="project" value="TreeGrafter"/>
</dbReference>
<dbReference type="GO" id="GO:0051539">
    <property type="term" value="F:4 iron, 4 sulfur cluster binding"/>
    <property type="evidence" value="ECO:0007669"/>
    <property type="project" value="UniProtKB-KW"/>
</dbReference>
<dbReference type="GO" id="GO:0005506">
    <property type="term" value="F:iron ion binding"/>
    <property type="evidence" value="ECO:0007669"/>
    <property type="project" value="UniProtKB-UniRule"/>
</dbReference>
<dbReference type="GO" id="GO:0008137">
    <property type="term" value="F:NADH dehydrogenase (ubiquinone) activity"/>
    <property type="evidence" value="ECO:0007669"/>
    <property type="project" value="InterPro"/>
</dbReference>
<dbReference type="GO" id="GO:0050136">
    <property type="term" value="F:NADH:ubiquinone reductase (non-electrogenic) activity"/>
    <property type="evidence" value="ECO:0007669"/>
    <property type="project" value="UniProtKB-UniRule"/>
</dbReference>
<dbReference type="GO" id="GO:0048038">
    <property type="term" value="F:quinone binding"/>
    <property type="evidence" value="ECO:0007669"/>
    <property type="project" value="UniProtKB-KW"/>
</dbReference>
<dbReference type="GO" id="GO:0009060">
    <property type="term" value="P:aerobic respiration"/>
    <property type="evidence" value="ECO:0007669"/>
    <property type="project" value="TreeGrafter"/>
</dbReference>
<dbReference type="GO" id="GO:0015990">
    <property type="term" value="P:electron transport coupled proton transport"/>
    <property type="evidence" value="ECO:0007669"/>
    <property type="project" value="TreeGrafter"/>
</dbReference>
<dbReference type="FunFam" id="3.40.50.12280:FF:000001">
    <property type="entry name" value="NADH-quinone oxidoreductase subunit B 2"/>
    <property type="match status" value="1"/>
</dbReference>
<dbReference type="Gene3D" id="3.40.50.12280">
    <property type="match status" value="1"/>
</dbReference>
<dbReference type="HAMAP" id="MF_01356">
    <property type="entry name" value="NDH1_NuoB"/>
    <property type="match status" value="1"/>
</dbReference>
<dbReference type="InterPro" id="IPR006137">
    <property type="entry name" value="NADH_UbQ_OxRdtase-like_20kDa"/>
</dbReference>
<dbReference type="InterPro" id="IPR006138">
    <property type="entry name" value="NADH_UQ_OxRdtase_20Kd_su"/>
</dbReference>
<dbReference type="NCBIfam" id="TIGR01957">
    <property type="entry name" value="nuoB_fam"/>
    <property type="match status" value="1"/>
</dbReference>
<dbReference type="NCBIfam" id="NF005012">
    <property type="entry name" value="PRK06411.1"/>
    <property type="match status" value="1"/>
</dbReference>
<dbReference type="PANTHER" id="PTHR11995">
    <property type="entry name" value="NADH DEHYDROGENASE"/>
    <property type="match status" value="1"/>
</dbReference>
<dbReference type="PANTHER" id="PTHR11995:SF14">
    <property type="entry name" value="NADH DEHYDROGENASE [UBIQUINONE] IRON-SULFUR PROTEIN 7, MITOCHONDRIAL"/>
    <property type="match status" value="1"/>
</dbReference>
<dbReference type="Pfam" id="PF01058">
    <property type="entry name" value="Oxidored_q6"/>
    <property type="match status" value="1"/>
</dbReference>
<dbReference type="SUPFAM" id="SSF56770">
    <property type="entry name" value="HydA/Nqo6-like"/>
    <property type="match status" value="1"/>
</dbReference>
<dbReference type="PROSITE" id="PS01150">
    <property type="entry name" value="COMPLEX1_20K"/>
    <property type="match status" value="1"/>
</dbReference>
<proteinExistence type="inferred from homology"/>
<gene>
    <name evidence="2" type="primary">nuoB</name>
    <name type="ordered locus">Mpe_A1404</name>
</gene>
<evidence type="ECO:0000250" key="1"/>
<evidence type="ECO:0000255" key="2">
    <source>
        <dbReference type="HAMAP-Rule" id="MF_01356"/>
    </source>
</evidence>
<sequence>MGIEGVLKEGFITTSADKLINWSKTGSLWPMTFGLACCAVEMMHAGAARYDIDRFGMLFRPSPRQSDLMIVAGTLCNKMAPALRRVYDQMAEPRWVLSMGSCANGGGYYHYSYSVVRGCDRIVPVDVYVPGCPPTAEALLYGILQLQAKIRRENTIAR</sequence>
<protein>
    <recommendedName>
        <fullName evidence="2">NADH-quinone oxidoreductase subunit B</fullName>
        <ecNumber evidence="2">7.1.1.-</ecNumber>
    </recommendedName>
    <alternativeName>
        <fullName evidence="2">NADH dehydrogenase I subunit B</fullName>
    </alternativeName>
    <alternativeName>
        <fullName evidence="2">NDH-1 subunit B</fullName>
    </alternativeName>
</protein>
<accession>A2SFM7</accession>
<reference key="1">
    <citation type="journal article" date="2007" name="J. Bacteriol.">
        <title>Whole-genome analysis of the methyl tert-butyl ether-degrading beta-proteobacterium Methylibium petroleiphilum PM1.</title>
        <authorList>
            <person name="Kane S.R."/>
            <person name="Chakicherla A.Y."/>
            <person name="Chain P.S.G."/>
            <person name="Schmidt R."/>
            <person name="Shin M.W."/>
            <person name="Legler T.C."/>
            <person name="Scow K.M."/>
            <person name="Larimer F.W."/>
            <person name="Lucas S.M."/>
            <person name="Richardson P.M."/>
            <person name="Hristova K.R."/>
        </authorList>
    </citation>
    <scope>NUCLEOTIDE SEQUENCE [LARGE SCALE GENOMIC DNA]</scope>
    <source>
        <strain>ATCC BAA-1232 / LMG 22953 / PM1</strain>
    </source>
</reference>
<name>NUOB_METPP</name>